<evidence type="ECO:0000250" key="1">
    <source>
        <dbReference type="UniProtKB" id="Q8WUQ7"/>
    </source>
</evidence>
<evidence type="ECO:0000256" key="2">
    <source>
        <dbReference type="SAM" id="MobiDB-lite"/>
    </source>
</evidence>
<evidence type="ECO:0000269" key="3">
    <source>
    </source>
</evidence>
<evidence type="ECO:0000303" key="4">
    <source ref="2"/>
</evidence>
<evidence type="ECO:0000305" key="5"/>
<keyword id="KW-0025">Alternative splicing</keyword>
<keyword id="KW-0175">Coiled coil</keyword>
<keyword id="KW-0963">Cytoplasm</keyword>
<keyword id="KW-0217">Developmental protein</keyword>
<keyword id="KW-0391">Immunity</keyword>
<keyword id="KW-0399">Innate immunity</keyword>
<keyword id="KW-0524">Neurogenesis</keyword>
<keyword id="KW-0539">Nucleus</keyword>
<keyword id="KW-1185">Reference proteome</keyword>
<dbReference type="EMBL" id="BX323861">
    <property type="status" value="NOT_ANNOTATED_CDS"/>
    <property type="molecule type" value="Genomic_DNA"/>
</dbReference>
<dbReference type="EMBL" id="CR926137">
    <property type="status" value="NOT_ANNOTATED_CDS"/>
    <property type="molecule type" value="Genomic_DNA"/>
</dbReference>
<dbReference type="EMBL" id="BC129326">
    <property type="protein sequence ID" value="AAI29327.1"/>
    <property type="molecule type" value="mRNA"/>
</dbReference>
<dbReference type="RefSeq" id="NP_001410755.1">
    <molecule id="F1Q8W0-1"/>
    <property type="nucleotide sequence ID" value="NM_001423826.1"/>
</dbReference>
<dbReference type="RefSeq" id="XP_005168489.1">
    <property type="nucleotide sequence ID" value="XM_005168432.3"/>
</dbReference>
<dbReference type="SMR" id="F1Q8W0"/>
<dbReference type="FunCoup" id="F1Q8W0">
    <property type="interactions" value="2770"/>
</dbReference>
<dbReference type="STRING" id="7955.ENSDARP00000078145"/>
<dbReference type="PaxDb" id="7955-ENSDARP00000078145"/>
<dbReference type="Ensembl" id="ENSDART00000083710">
    <molecule id="F1Q8W0-1"/>
    <property type="protein sequence ID" value="ENSDARP00000078145"/>
    <property type="gene ID" value="ENSDARG00000059866"/>
</dbReference>
<dbReference type="GeneID" id="100126813"/>
<dbReference type="AGR" id="ZFIN:ZDB-GENE-060503-322"/>
<dbReference type="ZFIN" id="ZDB-GENE-060503-322">
    <property type="gene designation" value="cactin"/>
</dbReference>
<dbReference type="eggNOG" id="KOG2370">
    <property type="taxonomic scope" value="Eukaryota"/>
</dbReference>
<dbReference type="HOGENOM" id="CLU_011759_0_0_1"/>
<dbReference type="InParanoid" id="F1Q8W0"/>
<dbReference type="OMA" id="RNRRYWE"/>
<dbReference type="OrthoDB" id="265955at2759"/>
<dbReference type="PhylomeDB" id="F1Q8W0"/>
<dbReference type="TreeFam" id="TF300906"/>
<dbReference type="Reactome" id="R-DRE-72163">
    <property type="pathway name" value="mRNA Splicing - Major Pathway"/>
</dbReference>
<dbReference type="PRO" id="PR:F1Q8W0"/>
<dbReference type="Proteomes" id="UP000000437">
    <property type="component" value="Chromosome 2"/>
</dbReference>
<dbReference type="Bgee" id="ENSDARG00000059866">
    <property type="expression patterns" value="Expressed in early embryo and 23 other cell types or tissues"/>
</dbReference>
<dbReference type="ExpressionAtlas" id="F1Q8W0">
    <property type="expression patterns" value="baseline"/>
</dbReference>
<dbReference type="GO" id="GO:0005737">
    <property type="term" value="C:cytoplasm"/>
    <property type="evidence" value="ECO:0000318"/>
    <property type="project" value="GO_Central"/>
</dbReference>
<dbReference type="GO" id="GO:0005634">
    <property type="term" value="C:nucleus"/>
    <property type="evidence" value="ECO:0000250"/>
    <property type="project" value="UniProtKB"/>
</dbReference>
<dbReference type="GO" id="GO:0005681">
    <property type="term" value="C:spliceosomal complex"/>
    <property type="evidence" value="ECO:0000318"/>
    <property type="project" value="GO_Central"/>
</dbReference>
<dbReference type="GO" id="GO:0008595">
    <property type="term" value="P:anterior/posterior axis specification, embryo"/>
    <property type="evidence" value="ECO:0000315"/>
    <property type="project" value="UniProtKB"/>
</dbReference>
<dbReference type="GO" id="GO:0001654">
    <property type="term" value="P:eye development"/>
    <property type="evidence" value="ECO:0000315"/>
    <property type="project" value="UniProtKB"/>
</dbReference>
<dbReference type="GO" id="GO:0045087">
    <property type="term" value="P:innate immune response"/>
    <property type="evidence" value="ECO:0007669"/>
    <property type="project" value="UniProtKB-KW"/>
</dbReference>
<dbReference type="GO" id="GO:0045292">
    <property type="term" value="P:mRNA cis splicing, via spliceosome"/>
    <property type="evidence" value="ECO:0000318"/>
    <property type="project" value="GO_Central"/>
</dbReference>
<dbReference type="GO" id="GO:0000398">
    <property type="term" value="P:mRNA splicing, via spliceosome"/>
    <property type="evidence" value="ECO:0000250"/>
    <property type="project" value="UniProtKB"/>
</dbReference>
<dbReference type="GO" id="GO:0045824">
    <property type="term" value="P:negative regulation of innate immune response"/>
    <property type="evidence" value="ECO:0000318"/>
    <property type="project" value="GO_Central"/>
</dbReference>
<dbReference type="GO" id="GO:0007399">
    <property type="term" value="P:nervous system development"/>
    <property type="evidence" value="ECO:0007669"/>
    <property type="project" value="UniProtKB-KW"/>
</dbReference>
<dbReference type="GO" id="GO:0003407">
    <property type="term" value="P:neural retina development"/>
    <property type="evidence" value="ECO:0000315"/>
    <property type="project" value="ZFIN"/>
</dbReference>
<dbReference type="GO" id="GO:0040019">
    <property type="term" value="P:positive regulation of embryonic development"/>
    <property type="evidence" value="ECO:0000315"/>
    <property type="project" value="UniProtKB"/>
</dbReference>
<dbReference type="InterPro" id="IPR019134">
    <property type="entry name" value="Cactin_C"/>
</dbReference>
<dbReference type="InterPro" id="IPR018816">
    <property type="entry name" value="Cactin_central"/>
</dbReference>
<dbReference type="PANTHER" id="PTHR21737">
    <property type="entry name" value="POLYGLUTAMINE BINDING PROTEIN 1/MARVEL MEMBRANE-ASSOCIATING DOMAIN CONTAINING 3"/>
    <property type="match status" value="1"/>
</dbReference>
<dbReference type="PANTHER" id="PTHR21737:SF6">
    <property type="entry name" value="SPLICING FACTOR CACTIN"/>
    <property type="match status" value="1"/>
</dbReference>
<dbReference type="Pfam" id="PF10312">
    <property type="entry name" value="Cactin_mid"/>
    <property type="match status" value="1"/>
</dbReference>
<dbReference type="Pfam" id="PF09732">
    <property type="entry name" value="CactinC_cactus"/>
    <property type="match status" value="1"/>
</dbReference>
<dbReference type="SMART" id="SM01050">
    <property type="entry name" value="CactinC_cactus"/>
    <property type="match status" value="1"/>
</dbReference>
<accession>F1Q8W0</accession>
<accession>A1L232</accession>
<sequence>MGSKKHRRSRSRSRSRERARVVRHDRSPGDRHSRNRSPVKSSRRRARSDSGGSRSSGGSAGPSRQRGRESGHSSDSDRQHRNTHGRNRDSSSDDDYHDKKKQALKKKHNDEKDSRSRRRKSRSSSGSSTNSSRERNRSKTSRSRERERRRRQSRSSSRERHRDQRRRRNSPERDRDRRRRSQSRSSSSSSSDSDHGGKSTQGGSSSKEEKKKQRDLMKALETPEEKRARRLAKKEAKERKKREKMGWSEEYMGYTNADNPFGDNNLLGTFIWQKALEKKGIGHLSEKNLKDRNKHIQEENRRELQKVKQLRLEREREKAMREQELEMLQREKEAEHFKTWAEQEDNFHLHQAKLRSKIRIRDGRAKPIDLLAKYISAEDDDLSVEMHEPYTFLNGLTVTDMEDLLEDIKVYMELECGKNVDFWRDMTTITEDEISKLRKLEASGKGPGDRREGINTSVSTDVQSVFKGKTYSQLQALYMNIESKIQAGGSNLDIGYWESLLQQVRVYMARARLRERHQDVLRQKLYKLKQEQGVESEPLFPIIKEEPEKEQPISREAGSGEEEAGSSSQQADREEDEDRRSRRTGGEEAERSGRSSPEEEKKGEEEEGEKDEAPEAVLTEEDLIQQSQAEYDSGRYSPTLLQNSELPLDTHIIAEEEDLQRLLLARRQMQVTGDASESAEDLFVRRAKEGMGGDEAQFSVEMPLTGKMYLWADKYRPRKPRFFNRVHTGFEWNKYNQTHYDFDNPPPKIVQGYKFNIFYPDLIDKRSTPQYFLEPCPDNKDFGILRFHAGPPYEDIAFKIVNREWEYSHRHGFRCQFANGIFQLWFHFKRYRYRR</sequence>
<organism>
    <name type="scientific">Danio rerio</name>
    <name type="common">Zebrafish</name>
    <name type="synonym">Brachydanio rerio</name>
    <dbReference type="NCBI Taxonomy" id="7955"/>
    <lineage>
        <taxon>Eukaryota</taxon>
        <taxon>Metazoa</taxon>
        <taxon>Chordata</taxon>
        <taxon>Craniata</taxon>
        <taxon>Vertebrata</taxon>
        <taxon>Euteleostomi</taxon>
        <taxon>Actinopterygii</taxon>
        <taxon>Neopterygii</taxon>
        <taxon>Teleostei</taxon>
        <taxon>Ostariophysi</taxon>
        <taxon>Cypriniformes</taxon>
        <taxon>Danionidae</taxon>
        <taxon>Danioninae</taxon>
        <taxon>Danio</taxon>
    </lineage>
</organism>
<proteinExistence type="evidence at transcript level"/>
<reference key="1">
    <citation type="journal article" date="2013" name="Nature">
        <title>The zebrafish reference genome sequence and its relationship to the human genome.</title>
        <authorList>
            <person name="Howe K."/>
            <person name="Clark M.D."/>
            <person name="Torroja C.F."/>
            <person name="Torrance J."/>
            <person name="Berthelot C."/>
            <person name="Muffato M."/>
            <person name="Collins J.E."/>
            <person name="Humphray S."/>
            <person name="McLaren K."/>
            <person name="Matthews L."/>
            <person name="McLaren S."/>
            <person name="Sealy I."/>
            <person name="Caccamo M."/>
            <person name="Churcher C."/>
            <person name="Scott C."/>
            <person name="Barrett J.C."/>
            <person name="Koch R."/>
            <person name="Rauch G.J."/>
            <person name="White S."/>
            <person name="Chow W."/>
            <person name="Kilian B."/>
            <person name="Quintais L.T."/>
            <person name="Guerra-Assuncao J.A."/>
            <person name="Zhou Y."/>
            <person name="Gu Y."/>
            <person name="Yen J."/>
            <person name="Vogel J.H."/>
            <person name="Eyre T."/>
            <person name="Redmond S."/>
            <person name="Banerjee R."/>
            <person name="Chi J."/>
            <person name="Fu B."/>
            <person name="Langley E."/>
            <person name="Maguire S.F."/>
            <person name="Laird G.K."/>
            <person name="Lloyd D."/>
            <person name="Kenyon E."/>
            <person name="Donaldson S."/>
            <person name="Sehra H."/>
            <person name="Almeida-King J."/>
            <person name="Loveland J."/>
            <person name="Trevanion S."/>
            <person name="Jones M."/>
            <person name="Quail M."/>
            <person name="Willey D."/>
            <person name="Hunt A."/>
            <person name="Burton J."/>
            <person name="Sims S."/>
            <person name="McLay K."/>
            <person name="Plumb B."/>
            <person name="Davis J."/>
            <person name="Clee C."/>
            <person name="Oliver K."/>
            <person name="Clark R."/>
            <person name="Riddle C."/>
            <person name="Elliot D."/>
            <person name="Threadgold G."/>
            <person name="Harden G."/>
            <person name="Ware D."/>
            <person name="Begum S."/>
            <person name="Mortimore B."/>
            <person name="Kerry G."/>
            <person name="Heath P."/>
            <person name="Phillimore B."/>
            <person name="Tracey A."/>
            <person name="Corby N."/>
            <person name="Dunn M."/>
            <person name="Johnson C."/>
            <person name="Wood J."/>
            <person name="Clark S."/>
            <person name="Pelan S."/>
            <person name="Griffiths G."/>
            <person name="Smith M."/>
            <person name="Glithero R."/>
            <person name="Howden P."/>
            <person name="Barker N."/>
            <person name="Lloyd C."/>
            <person name="Stevens C."/>
            <person name="Harley J."/>
            <person name="Holt K."/>
            <person name="Panagiotidis G."/>
            <person name="Lovell J."/>
            <person name="Beasley H."/>
            <person name="Henderson C."/>
            <person name="Gordon D."/>
            <person name="Auger K."/>
            <person name="Wright D."/>
            <person name="Collins J."/>
            <person name="Raisen C."/>
            <person name="Dyer L."/>
            <person name="Leung K."/>
            <person name="Robertson L."/>
            <person name="Ambridge K."/>
            <person name="Leongamornlert D."/>
            <person name="McGuire S."/>
            <person name="Gilderthorp R."/>
            <person name="Griffiths C."/>
            <person name="Manthravadi D."/>
            <person name="Nichol S."/>
            <person name="Barker G."/>
            <person name="Whitehead S."/>
            <person name="Kay M."/>
            <person name="Brown J."/>
            <person name="Murnane C."/>
            <person name="Gray E."/>
            <person name="Humphries M."/>
            <person name="Sycamore N."/>
            <person name="Barker D."/>
            <person name="Saunders D."/>
            <person name="Wallis J."/>
            <person name="Babbage A."/>
            <person name="Hammond S."/>
            <person name="Mashreghi-Mohammadi M."/>
            <person name="Barr L."/>
            <person name="Martin S."/>
            <person name="Wray P."/>
            <person name="Ellington A."/>
            <person name="Matthews N."/>
            <person name="Ellwood M."/>
            <person name="Woodmansey R."/>
            <person name="Clark G."/>
            <person name="Cooper J."/>
            <person name="Tromans A."/>
            <person name="Grafham D."/>
            <person name="Skuce C."/>
            <person name="Pandian R."/>
            <person name="Andrews R."/>
            <person name="Harrison E."/>
            <person name="Kimberley A."/>
            <person name="Garnett J."/>
            <person name="Fosker N."/>
            <person name="Hall R."/>
            <person name="Garner P."/>
            <person name="Kelly D."/>
            <person name="Bird C."/>
            <person name="Palmer S."/>
            <person name="Gehring I."/>
            <person name="Berger A."/>
            <person name="Dooley C.M."/>
            <person name="Ersan-Urun Z."/>
            <person name="Eser C."/>
            <person name="Geiger H."/>
            <person name="Geisler M."/>
            <person name="Karotki L."/>
            <person name="Kirn A."/>
            <person name="Konantz J."/>
            <person name="Konantz M."/>
            <person name="Oberlander M."/>
            <person name="Rudolph-Geiger S."/>
            <person name="Teucke M."/>
            <person name="Lanz C."/>
            <person name="Raddatz G."/>
            <person name="Osoegawa K."/>
            <person name="Zhu B."/>
            <person name="Rapp A."/>
            <person name="Widaa S."/>
            <person name="Langford C."/>
            <person name="Yang F."/>
            <person name="Schuster S.C."/>
            <person name="Carter N.P."/>
            <person name="Harrow J."/>
            <person name="Ning Z."/>
            <person name="Herrero J."/>
            <person name="Searle S.M."/>
            <person name="Enright A."/>
            <person name="Geisler R."/>
            <person name="Plasterk R.H."/>
            <person name="Lee C."/>
            <person name="Westerfield M."/>
            <person name="de Jong P.J."/>
            <person name="Zon L.I."/>
            <person name="Postlethwait J.H."/>
            <person name="Nusslein-Volhard C."/>
            <person name="Hubbard T.J."/>
            <person name="Roest Crollius H."/>
            <person name="Rogers J."/>
            <person name="Stemple D.L."/>
        </authorList>
    </citation>
    <scope>NUCLEOTIDE SEQUENCE [LARGE SCALE GENOMIC DNA]</scope>
    <source>
        <strain>Tuebingen</strain>
    </source>
</reference>
<reference key="2">
    <citation type="submission" date="2006-12" db="EMBL/GenBank/DDBJ databases">
        <authorList>
            <consortium name="NIH - Zebrafish Gene Collection (ZGC) project"/>
        </authorList>
    </citation>
    <scope>NUCLEOTIDE SEQUENCE [LARGE SCALE MRNA] (ISOFORM 2)</scope>
</reference>
<reference key="3">
    <citation type="journal article" date="2010" name="Gene Expr. Patterns">
        <title>Characterisation of expression patterns and functional role of Cactin in early zebrafish development.</title>
        <authorList>
            <person name="Atzei P."/>
            <person name="Yang F."/>
            <person name="Collery R."/>
            <person name="Kennedy B.N."/>
            <person name="Moynagh P.N."/>
        </authorList>
    </citation>
    <scope>FUNCTION</scope>
    <scope>DEVELOPMENTAL STAGE</scope>
</reference>
<gene>
    <name type="primary">cactin</name>
    <name type="ORF">si:dkey-158a20.4</name>
    <name type="ORF">zgc:158620</name>
</gene>
<protein>
    <recommendedName>
        <fullName evidence="5">Splicing factor Cactin</fullName>
        <shortName>zCactin</shortName>
    </recommendedName>
</protein>
<feature type="chain" id="PRO_0000419265" description="Splicing factor Cactin">
    <location>
        <begin position="1"/>
        <end position="835"/>
    </location>
</feature>
<feature type="region of interest" description="Disordered" evidence="2">
    <location>
        <begin position="1"/>
        <end position="244"/>
    </location>
</feature>
<feature type="region of interest" description="Disordered" evidence="2">
    <location>
        <begin position="537"/>
        <end position="617"/>
    </location>
</feature>
<feature type="compositionally biased region" description="Basic residues" evidence="2">
    <location>
        <begin position="1"/>
        <end position="13"/>
    </location>
</feature>
<feature type="compositionally biased region" description="Basic and acidic residues" evidence="2">
    <location>
        <begin position="14"/>
        <end position="32"/>
    </location>
</feature>
<feature type="compositionally biased region" description="Basic residues" evidence="2">
    <location>
        <begin position="33"/>
        <end position="46"/>
    </location>
</feature>
<feature type="compositionally biased region" description="Basic and acidic residues" evidence="2">
    <location>
        <begin position="66"/>
        <end position="98"/>
    </location>
</feature>
<feature type="compositionally biased region" description="Basic and acidic residues" evidence="2">
    <location>
        <begin position="132"/>
        <end position="146"/>
    </location>
</feature>
<feature type="compositionally biased region" description="Basic and acidic residues" evidence="2">
    <location>
        <begin position="206"/>
        <end position="238"/>
    </location>
</feature>
<feature type="compositionally biased region" description="Basic and acidic residues" evidence="2">
    <location>
        <begin position="543"/>
        <end position="553"/>
    </location>
</feature>
<feature type="compositionally biased region" description="Basic and acidic residues" evidence="2">
    <location>
        <begin position="578"/>
        <end position="604"/>
    </location>
</feature>
<feature type="compositionally biased region" description="Acidic residues" evidence="2">
    <location>
        <begin position="605"/>
        <end position="617"/>
    </location>
</feature>
<feature type="splice variant" id="VSP_044141" description="In isoform 2." evidence="4">
    <location>
        <begin position="1"/>
        <end position="411"/>
    </location>
</feature>
<feature type="splice variant" id="VSP_044142" description="In isoform 2." evidence="4">
    <original>EDEDRRSRRTGGEEAERSGRSSPEEEKKGEEEEGEKDEAPEAVLTEEDLIQQSQAEYDSGRYSPTLLQNSELPLDTHIIAEEEDLQRLLLARRQMQVTGDASESAEDLFVRRAKEGMGGDEAQFSVEMPLTGKMYLWADKYRPRKPRFFNRVHTGFEWNKYNQTHYDFDNPPPKIVQGYKFNIFYPDLIDKRSTPQYFLEPCPDNKDFGILRFHAGPPYEDIAFKIVNREWEYSHRHGFRCQFANGIFQLWFHFKRYRYRR</original>
    <variation>KEAEHFKTWAEQEDNFHLHQAKLRSKIRIRDGRAKPIDLLAKYISAEDDDLSVEMHEPYTFLNGLTVTDMEETETALQMTTTMIRRNRR</variation>
    <location>
        <begin position="575"/>
        <end position="835"/>
    </location>
</feature>
<feature type="sequence conflict" description="In Ref. 2; AAI29327." evidence="5" ref="2">
    <original>E</original>
    <variation>D</variation>
    <location>
        <position position="561"/>
    </location>
</feature>
<feature type="sequence conflict" description="In Ref. 2; AAI29327." evidence="5" ref="2">
    <original>A</original>
    <variation>R</variation>
    <location>
        <position position="571"/>
    </location>
</feature>
<name>CATIN_DANRE</name>
<comment type="function">
    <text evidence="1 3">Plays a role in pre-mRNA splicing by facilitating excision of a subset of introns (By similarity). May be involved in the regulation of innate immune response (By similarity). Plays a role during early embryonic development (PubMed:20348034). Involved in the formation of the anteroposterior axis with important roles also in neural development (PubMed:20348034).</text>
</comment>
<comment type="subcellular location">
    <subcellularLocation>
        <location evidence="1">Nucleus</location>
    </subcellularLocation>
    <subcellularLocation>
        <location evidence="1">Cytoplasm</location>
    </subcellularLocation>
</comment>
<comment type="alternative products">
    <event type="alternative splicing"/>
    <isoform>
        <id>F1Q8W0-1</id>
        <name>1</name>
        <sequence type="displayed"/>
    </isoform>
    <isoform>
        <id>F1Q8W0-2</id>
        <name>2</name>
        <sequence type="described" ref="VSP_044141 VSP_044142"/>
    </isoform>
</comment>
<comment type="developmental stage">
    <text evidence="3">Both maternally and zygotically expressed. Expressed at all stages of early development. Expressed from 8-cell stage to 48 hours post-fertilization (hpf). Expressed in the eyes at 48 hpf.</text>
</comment>
<comment type="similarity">
    <text evidence="5">Belongs to the CACTIN family.</text>
</comment>